<proteinExistence type="inferred from homology"/>
<evidence type="ECO:0000255" key="1">
    <source>
        <dbReference type="HAMAP-Rule" id="MF_00034"/>
    </source>
</evidence>
<feature type="chain" id="PRO_1000090557" description="Crossover junction endodeoxyribonuclease RuvC">
    <location>
        <begin position="1"/>
        <end position="173"/>
    </location>
</feature>
<feature type="active site" evidence="1">
    <location>
        <position position="8"/>
    </location>
</feature>
<feature type="active site" evidence="1">
    <location>
        <position position="67"/>
    </location>
</feature>
<feature type="active site" evidence="1">
    <location>
        <position position="139"/>
    </location>
</feature>
<feature type="binding site" evidence="1">
    <location>
        <position position="8"/>
    </location>
    <ligand>
        <name>Mg(2+)</name>
        <dbReference type="ChEBI" id="CHEBI:18420"/>
        <label>1</label>
    </ligand>
</feature>
<feature type="binding site" evidence="1">
    <location>
        <position position="67"/>
    </location>
    <ligand>
        <name>Mg(2+)</name>
        <dbReference type="ChEBI" id="CHEBI:18420"/>
        <label>2</label>
    </ligand>
</feature>
<feature type="binding site" evidence="1">
    <location>
        <position position="139"/>
    </location>
    <ligand>
        <name>Mg(2+)</name>
        <dbReference type="ChEBI" id="CHEBI:18420"/>
        <label>1</label>
    </ligand>
</feature>
<dbReference type="EC" id="3.1.21.10" evidence="1"/>
<dbReference type="EMBL" id="AM933172">
    <property type="protein sequence ID" value="CAR32688.1"/>
    <property type="molecule type" value="Genomic_DNA"/>
</dbReference>
<dbReference type="RefSeq" id="WP_000022509.1">
    <property type="nucleotide sequence ID" value="NC_011294.1"/>
</dbReference>
<dbReference type="SMR" id="B5R1V5"/>
<dbReference type="GeneID" id="93033412"/>
<dbReference type="KEGG" id="set:SEN1105"/>
<dbReference type="HOGENOM" id="CLU_091257_2_1_6"/>
<dbReference type="Proteomes" id="UP000000613">
    <property type="component" value="Chromosome"/>
</dbReference>
<dbReference type="GO" id="GO:0005737">
    <property type="term" value="C:cytoplasm"/>
    <property type="evidence" value="ECO:0007669"/>
    <property type="project" value="UniProtKB-SubCell"/>
</dbReference>
<dbReference type="GO" id="GO:0048476">
    <property type="term" value="C:Holliday junction resolvase complex"/>
    <property type="evidence" value="ECO:0007669"/>
    <property type="project" value="UniProtKB-UniRule"/>
</dbReference>
<dbReference type="GO" id="GO:0008821">
    <property type="term" value="F:crossover junction DNA endonuclease activity"/>
    <property type="evidence" value="ECO:0007669"/>
    <property type="project" value="UniProtKB-UniRule"/>
</dbReference>
<dbReference type="GO" id="GO:0003677">
    <property type="term" value="F:DNA binding"/>
    <property type="evidence" value="ECO:0007669"/>
    <property type="project" value="UniProtKB-KW"/>
</dbReference>
<dbReference type="GO" id="GO:0000287">
    <property type="term" value="F:magnesium ion binding"/>
    <property type="evidence" value="ECO:0007669"/>
    <property type="project" value="UniProtKB-UniRule"/>
</dbReference>
<dbReference type="GO" id="GO:0006310">
    <property type="term" value="P:DNA recombination"/>
    <property type="evidence" value="ECO:0007669"/>
    <property type="project" value="UniProtKB-UniRule"/>
</dbReference>
<dbReference type="GO" id="GO:0006281">
    <property type="term" value="P:DNA repair"/>
    <property type="evidence" value="ECO:0007669"/>
    <property type="project" value="UniProtKB-UniRule"/>
</dbReference>
<dbReference type="CDD" id="cd16962">
    <property type="entry name" value="RuvC"/>
    <property type="match status" value="1"/>
</dbReference>
<dbReference type="FunFam" id="3.30.420.10:FF:000002">
    <property type="entry name" value="Crossover junction endodeoxyribonuclease RuvC"/>
    <property type="match status" value="1"/>
</dbReference>
<dbReference type="Gene3D" id="3.30.420.10">
    <property type="entry name" value="Ribonuclease H-like superfamily/Ribonuclease H"/>
    <property type="match status" value="1"/>
</dbReference>
<dbReference type="HAMAP" id="MF_00034">
    <property type="entry name" value="RuvC"/>
    <property type="match status" value="1"/>
</dbReference>
<dbReference type="InterPro" id="IPR012337">
    <property type="entry name" value="RNaseH-like_sf"/>
</dbReference>
<dbReference type="InterPro" id="IPR036397">
    <property type="entry name" value="RNaseH_sf"/>
</dbReference>
<dbReference type="InterPro" id="IPR020563">
    <property type="entry name" value="X-over_junc_endoDNase_Mg_BS"/>
</dbReference>
<dbReference type="InterPro" id="IPR002176">
    <property type="entry name" value="X-over_junc_endoDNase_RuvC"/>
</dbReference>
<dbReference type="NCBIfam" id="NF000711">
    <property type="entry name" value="PRK00039.2-1"/>
    <property type="match status" value="1"/>
</dbReference>
<dbReference type="NCBIfam" id="TIGR00228">
    <property type="entry name" value="ruvC"/>
    <property type="match status" value="1"/>
</dbReference>
<dbReference type="PANTHER" id="PTHR30194">
    <property type="entry name" value="CROSSOVER JUNCTION ENDODEOXYRIBONUCLEASE RUVC"/>
    <property type="match status" value="1"/>
</dbReference>
<dbReference type="PANTHER" id="PTHR30194:SF3">
    <property type="entry name" value="CROSSOVER JUNCTION ENDODEOXYRIBONUCLEASE RUVC"/>
    <property type="match status" value="1"/>
</dbReference>
<dbReference type="Pfam" id="PF02075">
    <property type="entry name" value="RuvC"/>
    <property type="match status" value="1"/>
</dbReference>
<dbReference type="PRINTS" id="PR00696">
    <property type="entry name" value="RSOLVASERUVC"/>
</dbReference>
<dbReference type="SUPFAM" id="SSF53098">
    <property type="entry name" value="Ribonuclease H-like"/>
    <property type="match status" value="1"/>
</dbReference>
<dbReference type="PROSITE" id="PS01321">
    <property type="entry name" value="RUVC"/>
    <property type="match status" value="1"/>
</dbReference>
<protein>
    <recommendedName>
        <fullName evidence="1">Crossover junction endodeoxyribonuclease RuvC</fullName>
        <ecNumber evidence="1">3.1.21.10</ecNumber>
    </recommendedName>
    <alternativeName>
        <fullName evidence="1">Holliday junction nuclease RuvC</fullName>
    </alternativeName>
    <alternativeName>
        <fullName evidence="1">Holliday junction resolvase RuvC</fullName>
    </alternativeName>
</protein>
<accession>B5R1V5</accession>
<gene>
    <name evidence="1" type="primary">ruvC</name>
    <name type="ordered locus">SEN1105</name>
</gene>
<name>RUVC_SALEP</name>
<reference key="1">
    <citation type="journal article" date="2008" name="Genome Res.">
        <title>Comparative genome analysis of Salmonella enteritidis PT4 and Salmonella gallinarum 287/91 provides insights into evolutionary and host adaptation pathways.</title>
        <authorList>
            <person name="Thomson N.R."/>
            <person name="Clayton D.J."/>
            <person name="Windhorst D."/>
            <person name="Vernikos G."/>
            <person name="Davidson S."/>
            <person name="Churcher C."/>
            <person name="Quail M.A."/>
            <person name="Stevens M."/>
            <person name="Jones M.A."/>
            <person name="Watson M."/>
            <person name="Barron A."/>
            <person name="Layton A."/>
            <person name="Pickard D."/>
            <person name="Kingsley R.A."/>
            <person name="Bignell A."/>
            <person name="Clark L."/>
            <person name="Harris B."/>
            <person name="Ormond D."/>
            <person name="Abdellah Z."/>
            <person name="Brooks K."/>
            <person name="Cherevach I."/>
            <person name="Chillingworth T."/>
            <person name="Woodward J."/>
            <person name="Norberczak H."/>
            <person name="Lord A."/>
            <person name="Arrowsmith C."/>
            <person name="Jagels K."/>
            <person name="Moule S."/>
            <person name="Mungall K."/>
            <person name="Saunders M."/>
            <person name="Whitehead S."/>
            <person name="Chabalgoity J.A."/>
            <person name="Maskell D."/>
            <person name="Humphreys T."/>
            <person name="Roberts M."/>
            <person name="Barrow P.A."/>
            <person name="Dougan G."/>
            <person name="Parkhill J."/>
        </authorList>
    </citation>
    <scope>NUCLEOTIDE SEQUENCE [LARGE SCALE GENOMIC DNA]</scope>
    <source>
        <strain>P125109</strain>
    </source>
</reference>
<sequence>MSIILGIDPGSRITGYGVIRQVGRQLTYLGSGCIRTKVDDLPSRLKLIYAGVTEIITQFQPDYFAIEQVFMAKNADSALKLGQARGVAIVAAVNQELPVFEYAARQVKQTVVGIGSAEKSQVQHMVRTLLKLPANPQADAADALAIAITHCHVSQNAMQMSESRLNLARGRLR</sequence>
<keyword id="KW-0963">Cytoplasm</keyword>
<keyword id="KW-0227">DNA damage</keyword>
<keyword id="KW-0233">DNA recombination</keyword>
<keyword id="KW-0234">DNA repair</keyword>
<keyword id="KW-0238">DNA-binding</keyword>
<keyword id="KW-0255">Endonuclease</keyword>
<keyword id="KW-0378">Hydrolase</keyword>
<keyword id="KW-0460">Magnesium</keyword>
<keyword id="KW-0479">Metal-binding</keyword>
<keyword id="KW-0540">Nuclease</keyword>
<organism>
    <name type="scientific">Salmonella enteritidis PT4 (strain P125109)</name>
    <dbReference type="NCBI Taxonomy" id="550537"/>
    <lineage>
        <taxon>Bacteria</taxon>
        <taxon>Pseudomonadati</taxon>
        <taxon>Pseudomonadota</taxon>
        <taxon>Gammaproteobacteria</taxon>
        <taxon>Enterobacterales</taxon>
        <taxon>Enterobacteriaceae</taxon>
        <taxon>Salmonella</taxon>
    </lineage>
</organism>
<comment type="function">
    <text evidence="1">The RuvA-RuvB-RuvC complex processes Holliday junction (HJ) DNA during genetic recombination and DNA repair. Endonuclease that resolves HJ intermediates. Cleaves cruciform DNA by making single-stranded nicks across the HJ at symmetrical positions within the homologous arms, yielding a 5'-phosphate and a 3'-hydroxyl group; requires a central core of homology in the junction. The consensus cleavage sequence is 5'-(A/T)TT(C/G)-3'. Cleavage occurs on the 3'-side of the TT dinucleotide at the point of strand exchange. HJ branch migration catalyzed by RuvA-RuvB allows RuvC to scan DNA until it finds its consensus sequence, where it cleaves and resolves the cruciform DNA.</text>
</comment>
<comment type="catalytic activity">
    <reaction evidence="1">
        <text>Endonucleolytic cleavage at a junction such as a reciprocal single-stranded crossover between two homologous DNA duplexes (Holliday junction).</text>
        <dbReference type="EC" id="3.1.21.10"/>
    </reaction>
</comment>
<comment type="cofactor">
    <cofactor evidence="1">
        <name>Mg(2+)</name>
        <dbReference type="ChEBI" id="CHEBI:18420"/>
    </cofactor>
    <text evidence="1">Binds 2 Mg(2+) ion per subunit.</text>
</comment>
<comment type="subunit">
    <text evidence="1">Homodimer which binds Holliday junction (HJ) DNA. The HJ becomes 2-fold symmetrical on binding to RuvC with unstacked arms; it has a different conformation from HJ DNA in complex with RuvA. In the full resolvosome a probable DNA-RuvA(4)-RuvB(12)-RuvC(2) complex forms which resolves the HJ.</text>
</comment>
<comment type="subcellular location">
    <subcellularLocation>
        <location evidence="1">Cytoplasm</location>
    </subcellularLocation>
</comment>
<comment type="similarity">
    <text evidence="1">Belongs to the RuvC family.</text>
</comment>